<name>Y1806_STAAW</name>
<protein>
    <recommendedName>
        <fullName>Putative multidrug export ATP-binding/permease protein MW1806</fullName>
        <ecNumber>7.6.2.-</ecNumber>
    </recommendedName>
</protein>
<reference key="1">
    <citation type="journal article" date="2002" name="Lancet">
        <title>Genome and virulence determinants of high virulence community-acquired MRSA.</title>
        <authorList>
            <person name="Baba T."/>
            <person name="Takeuchi F."/>
            <person name="Kuroda M."/>
            <person name="Yuzawa H."/>
            <person name="Aoki K."/>
            <person name="Oguchi A."/>
            <person name="Nagai Y."/>
            <person name="Iwama N."/>
            <person name="Asano K."/>
            <person name="Naimi T."/>
            <person name="Kuroda H."/>
            <person name="Cui L."/>
            <person name="Yamamoto K."/>
            <person name="Hiramatsu K."/>
        </authorList>
    </citation>
    <scope>NUCLEOTIDE SEQUENCE [LARGE SCALE GENOMIC DNA]</scope>
    <source>
        <strain>MW2</strain>
    </source>
</reference>
<accession>Q7A0J1</accession>
<proteinExistence type="inferred from homology"/>
<evidence type="ECO:0000250" key="1"/>
<evidence type="ECO:0000255" key="2"/>
<evidence type="ECO:0000255" key="3">
    <source>
        <dbReference type="PROSITE-ProRule" id="PRU00434"/>
    </source>
</evidence>
<evidence type="ECO:0000255" key="4">
    <source>
        <dbReference type="PROSITE-ProRule" id="PRU00441"/>
    </source>
</evidence>
<evidence type="ECO:0000305" key="5"/>
<dbReference type="EC" id="7.6.2.-"/>
<dbReference type="EMBL" id="BA000033">
    <property type="protein sequence ID" value="BAB95671.1"/>
    <property type="molecule type" value="Genomic_DNA"/>
</dbReference>
<dbReference type="RefSeq" id="WP_000597238.1">
    <property type="nucleotide sequence ID" value="NC_003923.1"/>
</dbReference>
<dbReference type="SMR" id="Q7A0J1"/>
<dbReference type="KEGG" id="sam:MW1806"/>
<dbReference type="HOGENOM" id="CLU_000604_84_3_9"/>
<dbReference type="GO" id="GO:0005886">
    <property type="term" value="C:plasma membrane"/>
    <property type="evidence" value="ECO:0007669"/>
    <property type="project" value="UniProtKB-SubCell"/>
</dbReference>
<dbReference type="GO" id="GO:0015421">
    <property type="term" value="F:ABC-type oligopeptide transporter activity"/>
    <property type="evidence" value="ECO:0007669"/>
    <property type="project" value="TreeGrafter"/>
</dbReference>
<dbReference type="GO" id="GO:0005524">
    <property type="term" value="F:ATP binding"/>
    <property type="evidence" value="ECO:0007669"/>
    <property type="project" value="UniProtKB-KW"/>
</dbReference>
<dbReference type="GO" id="GO:0016887">
    <property type="term" value="F:ATP hydrolysis activity"/>
    <property type="evidence" value="ECO:0007669"/>
    <property type="project" value="InterPro"/>
</dbReference>
<dbReference type="CDD" id="cd18554">
    <property type="entry name" value="ABC_6TM_Sav1866_like"/>
    <property type="match status" value="1"/>
</dbReference>
<dbReference type="CDD" id="cd03251">
    <property type="entry name" value="ABCC_MsbA"/>
    <property type="match status" value="1"/>
</dbReference>
<dbReference type="FunFam" id="1.20.1560.10:FF:000069">
    <property type="entry name" value="Multidrug ABC transporter ATP-binding protein"/>
    <property type="match status" value="1"/>
</dbReference>
<dbReference type="FunFam" id="3.40.50.300:FF:000218">
    <property type="entry name" value="Multidrug ABC transporter ATP-binding protein"/>
    <property type="match status" value="1"/>
</dbReference>
<dbReference type="Gene3D" id="1.20.1560.10">
    <property type="entry name" value="ABC transporter type 1, transmembrane domain"/>
    <property type="match status" value="1"/>
</dbReference>
<dbReference type="Gene3D" id="3.40.50.300">
    <property type="entry name" value="P-loop containing nucleotide triphosphate hydrolases"/>
    <property type="match status" value="1"/>
</dbReference>
<dbReference type="InterPro" id="IPR003593">
    <property type="entry name" value="AAA+_ATPase"/>
</dbReference>
<dbReference type="InterPro" id="IPR011527">
    <property type="entry name" value="ABC1_TM_dom"/>
</dbReference>
<dbReference type="InterPro" id="IPR036640">
    <property type="entry name" value="ABC1_TM_sf"/>
</dbReference>
<dbReference type="InterPro" id="IPR003439">
    <property type="entry name" value="ABC_transporter-like_ATP-bd"/>
</dbReference>
<dbReference type="InterPro" id="IPR017871">
    <property type="entry name" value="ABC_transporter-like_CS"/>
</dbReference>
<dbReference type="InterPro" id="IPR027417">
    <property type="entry name" value="P-loop_NTPase"/>
</dbReference>
<dbReference type="InterPro" id="IPR039421">
    <property type="entry name" value="Type_1_exporter"/>
</dbReference>
<dbReference type="PANTHER" id="PTHR43394:SF1">
    <property type="entry name" value="ATP-BINDING CASSETTE SUB-FAMILY B MEMBER 10, MITOCHONDRIAL"/>
    <property type="match status" value="1"/>
</dbReference>
<dbReference type="PANTHER" id="PTHR43394">
    <property type="entry name" value="ATP-DEPENDENT PERMEASE MDL1, MITOCHONDRIAL"/>
    <property type="match status" value="1"/>
</dbReference>
<dbReference type="Pfam" id="PF00664">
    <property type="entry name" value="ABC_membrane"/>
    <property type="match status" value="1"/>
</dbReference>
<dbReference type="Pfam" id="PF00005">
    <property type="entry name" value="ABC_tran"/>
    <property type="match status" value="1"/>
</dbReference>
<dbReference type="SMART" id="SM00382">
    <property type="entry name" value="AAA"/>
    <property type="match status" value="1"/>
</dbReference>
<dbReference type="SUPFAM" id="SSF90123">
    <property type="entry name" value="ABC transporter transmembrane region"/>
    <property type="match status" value="1"/>
</dbReference>
<dbReference type="SUPFAM" id="SSF52540">
    <property type="entry name" value="P-loop containing nucleoside triphosphate hydrolases"/>
    <property type="match status" value="1"/>
</dbReference>
<dbReference type="PROSITE" id="PS50929">
    <property type="entry name" value="ABC_TM1F"/>
    <property type="match status" value="1"/>
</dbReference>
<dbReference type="PROSITE" id="PS00211">
    <property type="entry name" value="ABC_TRANSPORTER_1"/>
    <property type="match status" value="1"/>
</dbReference>
<dbReference type="PROSITE" id="PS50893">
    <property type="entry name" value="ABC_TRANSPORTER_2"/>
    <property type="match status" value="1"/>
</dbReference>
<feature type="chain" id="PRO_0000271553" description="Putative multidrug export ATP-binding/permease protein MW1806">
    <location>
        <begin position="1"/>
        <end position="578"/>
    </location>
</feature>
<feature type="topological domain" description="Cytoplasmic" evidence="2">
    <location>
        <begin position="1"/>
        <end position="15"/>
    </location>
</feature>
<feature type="transmembrane region" description="Helical" evidence="4">
    <location>
        <begin position="16"/>
        <end position="36"/>
    </location>
</feature>
<feature type="topological domain" description="Extracellular" evidence="2">
    <location>
        <begin position="37"/>
        <end position="59"/>
    </location>
</feature>
<feature type="transmembrane region" description="Helical" evidence="4">
    <location>
        <begin position="60"/>
        <end position="80"/>
    </location>
</feature>
<feature type="topological domain" description="Cytoplasmic" evidence="2">
    <location>
        <begin position="81"/>
        <end position="138"/>
    </location>
</feature>
<feature type="transmembrane region" description="Helical" evidence="4">
    <location>
        <begin position="139"/>
        <end position="159"/>
    </location>
</feature>
<feature type="topological domain" description="Extracellular" evidence="2">
    <location>
        <begin position="160"/>
        <end position="162"/>
    </location>
</feature>
<feature type="transmembrane region" description="Helical" evidence="4">
    <location>
        <begin position="163"/>
        <end position="183"/>
    </location>
</feature>
<feature type="topological domain" description="Cytoplasmic" evidence="2">
    <location>
        <begin position="184"/>
        <end position="244"/>
    </location>
</feature>
<feature type="transmembrane region" description="Helical" evidence="4">
    <location>
        <begin position="245"/>
        <end position="263"/>
    </location>
</feature>
<feature type="topological domain" description="Extracellular" evidence="2">
    <location>
        <begin position="264"/>
        <end position="269"/>
    </location>
</feature>
<feature type="transmembrane region" description="Helical" evidence="4">
    <location>
        <begin position="270"/>
        <end position="287"/>
    </location>
</feature>
<feature type="topological domain" description="Cytoplasmic" evidence="2">
    <location>
        <begin position="288"/>
        <end position="578"/>
    </location>
</feature>
<feature type="domain" description="ABC transmembrane type-1" evidence="4">
    <location>
        <begin position="16"/>
        <end position="306"/>
    </location>
</feature>
<feature type="domain" description="ABC transporter" evidence="3">
    <location>
        <begin position="340"/>
        <end position="575"/>
    </location>
</feature>
<feature type="binding site" evidence="3">
    <location>
        <begin position="374"/>
        <end position="381"/>
    </location>
    <ligand>
        <name>ATP</name>
        <dbReference type="ChEBI" id="CHEBI:30616"/>
    </ligand>
</feature>
<keyword id="KW-0067">ATP-binding</keyword>
<keyword id="KW-1003">Cell membrane</keyword>
<keyword id="KW-0472">Membrane</keyword>
<keyword id="KW-0547">Nucleotide-binding</keyword>
<keyword id="KW-1278">Translocase</keyword>
<keyword id="KW-0812">Transmembrane</keyword>
<keyword id="KW-1133">Transmembrane helix</keyword>
<keyword id="KW-0813">Transport</keyword>
<organism>
    <name type="scientific">Staphylococcus aureus (strain MW2)</name>
    <dbReference type="NCBI Taxonomy" id="196620"/>
    <lineage>
        <taxon>Bacteria</taxon>
        <taxon>Bacillati</taxon>
        <taxon>Bacillota</taxon>
        <taxon>Bacilli</taxon>
        <taxon>Bacillales</taxon>
        <taxon>Staphylococcaceae</taxon>
        <taxon>Staphylococcus</taxon>
    </lineage>
</organism>
<gene>
    <name type="ordered locus">MW1806</name>
</gene>
<comment type="function">
    <text evidence="1">May be involved in multidrug export. Transmembrane domains (TMD) form a pore in the cell membrane and the ATP-binding domain (NBD) is responsible for energy generation (By similarity).</text>
</comment>
<comment type="subunit">
    <text evidence="1">Homodimer.</text>
</comment>
<comment type="subcellular location">
    <subcellularLocation>
        <location evidence="1">Cell membrane</location>
        <topology evidence="4">Multi-pass membrane protein</topology>
    </subcellularLocation>
</comment>
<comment type="domain">
    <text>The ATP-binding domain (NBD) and the transmembrane domain (TMD) are fused.</text>
</comment>
<comment type="similarity">
    <text evidence="5">Belongs to the ABC transporter superfamily.</text>
</comment>
<sequence>MIKRYLQFVKPYKYRIFATIIVGIIKFGIPMLIPLLIKYAIDGVINNHALTTDEKVHHLTIAIGIALFIFVIVRPPIEFIRQYLAQWTSNKILYDIRKKLYNHLQALSARFYANNQVGQVISRVINDVEQTKDFILTGLMNIWLDCITIIIALSIMFFLDVKLTLAALFIFPFYILTVYVFFGRLRKLTRERSQALAEVQGFLHERVQGISVVKSFAIEDNEAKNFDKKNTNFLTRALKHTRWNAYSFAAINTVTDIGPIIVIGVGAYLAISGSITVGTLAAFVGYLELLFGPLRRLVASFTTLTQSFASMDRVFQLIDEDYDIKNGVGAQPIEIKQGRIDIDHVSFQYNDNEAPILKDINLSIEKGETVAFVGMSGGGKSTLINLIPRFYDVTSGQILIDGHNIKDFLTGSLRNQIGLVQQDNILFSDTVKENILLGRPTATDEEVVEAAKMANAHDFIMNLPQGYDTEVGERGVKLSGGQKQRLSIARIFLNNPPILILDEATSALDLESESIIQEALDVLSKDRTTLIVAHRLSTITHADKIVVIENGHIVETGTHRELIAKQGAYEHLYSIQNL</sequence>